<reference key="1">
    <citation type="journal article" date="2001" name="Nature">
        <title>Genome sequence of enterohaemorrhagic Escherichia coli O157:H7.</title>
        <authorList>
            <person name="Perna N.T."/>
            <person name="Plunkett G. III"/>
            <person name="Burland V."/>
            <person name="Mau B."/>
            <person name="Glasner J.D."/>
            <person name="Rose D.J."/>
            <person name="Mayhew G.F."/>
            <person name="Evans P.S."/>
            <person name="Gregor J."/>
            <person name="Kirkpatrick H.A."/>
            <person name="Posfai G."/>
            <person name="Hackett J."/>
            <person name="Klink S."/>
            <person name="Boutin A."/>
            <person name="Shao Y."/>
            <person name="Miller L."/>
            <person name="Grotbeck E.J."/>
            <person name="Davis N.W."/>
            <person name="Lim A."/>
            <person name="Dimalanta E.T."/>
            <person name="Potamousis K."/>
            <person name="Apodaca J."/>
            <person name="Anantharaman T.S."/>
            <person name="Lin J."/>
            <person name="Yen G."/>
            <person name="Schwartz D.C."/>
            <person name="Welch R.A."/>
            <person name="Blattner F.R."/>
        </authorList>
    </citation>
    <scope>NUCLEOTIDE SEQUENCE [LARGE SCALE GENOMIC DNA]</scope>
    <source>
        <strain>O157:H7 / EDL933 / ATCC 700927 / EHEC</strain>
    </source>
</reference>
<reference key="2">
    <citation type="journal article" date="2001" name="DNA Res.">
        <title>Complete genome sequence of enterohemorrhagic Escherichia coli O157:H7 and genomic comparison with a laboratory strain K-12.</title>
        <authorList>
            <person name="Hayashi T."/>
            <person name="Makino K."/>
            <person name="Ohnishi M."/>
            <person name="Kurokawa K."/>
            <person name="Ishii K."/>
            <person name="Yokoyama K."/>
            <person name="Han C.-G."/>
            <person name="Ohtsubo E."/>
            <person name="Nakayama K."/>
            <person name="Murata T."/>
            <person name="Tanaka M."/>
            <person name="Tobe T."/>
            <person name="Iida T."/>
            <person name="Takami H."/>
            <person name="Honda T."/>
            <person name="Sasakawa C."/>
            <person name="Ogasawara N."/>
            <person name="Yasunaga T."/>
            <person name="Kuhara S."/>
            <person name="Shiba T."/>
            <person name="Hattori M."/>
            <person name="Shinagawa H."/>
        </authorList>
    </citation>
    <scope>NUCLEOTIDE SEQUENCE [LARGE SCALE GENOMIC DNA]</scope>
    <source>
        <strain>O157:H7 / Sakai / RIMD 0509952 / EHEC</strain>
    </source>
</reference>
<dbReference type="EMBL" id="AE005174">
    <property type="protein sequence ID" value="AAG54908.1"/>
    <property type="molecule type" value="Genomic_DNA"/>
</dbReference>
<dbReference type="EMBL" id="BA000007">
    <property type="protein sequence ID" value="BAB34036.1"/>
    <property type="molecule type" value="Genomic_DNA"/>
</dbReference>
<dbReference type="PIR" id="E90705">
    <property type="entry name" value="E90705"/>
</dbReference>
<dbReference type="PIR" id="H85555">
    <property type="entry name" value="H85555"/>
</dbReference>
<dbReference type="RefSeq" id="NP_308640.1">
    <property type="nucleotide sequence ID" value="NC_002695.1"/>
</dbReference>
<dbReference type="RefSeq" id="WP_000573920.1">
    <property type="nucleotide sequence ID" value="NZ_VOAI01000012.1"/>
</dbReference>
<dbReference type="SMR" id="Q8XBY1"/>
<dbReference type="STRING" id="155864.Z0714"/>
<dbReference type="GeneID" id="916972"/>
<dbReference type="KEGG" id="ece:Z0714"/>
<dbReference type="KEGG" id="ecs:ECs_0613"/>
<dbReference type="PATRIC" id="fig|386585.9.peg.721"/>
<dbReference type="eggNOG" id="COG3696">
    <property type="taxonomic scope" value="Bacteria"/>
</dbReference>
<dbReference type="HOGENOM" id="CLU_002755_1_2_6"/>
<dbReference type="OMA" id="NSWTYPI"/>
<dbReference type="Proteomes" id="UP000000558">
    <property type="component" value="Chromosome"/>
</dbReference>
<dbReference type="Proteomes" id="UP000002519">
    <property type="component" value="Chromosome"/>
</dbReference>
<dbReference type="GO" id="GO:0005886">
    <property type="term" value="C:plasma membrane"/>
    <property type="evidence" value="ECO:0007669"/>
    <property type="project" value="UniProtKB-SubCell"/>
</dbReference>
<dbReference type="GO" id="GO:0008324">
    <property type="term" value="F:monoatomic cation transmembrane transporter activity"/>
    <property type="evidence" value="ECO:0007669"/>
    <property type="project" value="InterPro"/>
</dbReference>
<dbReference type="GO" id="GO:0042910">
    <property type="term" value="F:xenobiotic transmembrane transporter activity"/>
    <property type="evidence" value="ECO:0007669"/>
    <property type="project" value="TreeGrafter"/>
</dbReference>
<dbReference type="GO" id="GO:0006825">
    <property type="term" value="P:copper ion transport"/>
    <property type="evidence" value="ECO:0007669"/>
    <property type="project" value="UniProtKB-KW"/>
</dbReference>
<dbReference type="FunFam" id="3.30.70.1430:FF:000006">
    <property type="entry name" value="Putative cation efflux system protein CusA"/>
    <property type="match status" value="1"/>
</dbReference>
<dbReference type="Gene3D" id="3.30.70.1430">
    <property type="entry name" value="Multidrug efflux transporter AcrB pore domain"/>
    <property type="match status" value="2"/>
</dbReference>
<dbReference type="Gene3D" id="3.30.70.1440">
    <property type="entry name" value="Multidrug efflux transporter AcrB pore domain"/>
    <property type="match status" value="1"/>
</dbReference>
<dbReference type="Gene3D" id="3.30.70.1320">
    <property type="entry name" value="Multidrug efflux transporter AcrB pore domain like"/>
    <property type="match status" value="1"/>
</dbReference>
<dbReference type="Gene3D" id="3.30.2090.10">
    <property type="entry name" value="Multidrug efflux transporter AcrB TolC docking domain, DN and DC subdomains"/>
    <property type="match status" value="2"/>
</dbReference>
<dbReference type="Gene3D" id="1.20.1640.10">
    <property type="entry name" value="Multidrug efflux transporter AcrB transmembrane domain"/>
    <property type="match status" value="2"/>
</dbReference>
<dbReference type="InterPro" id="IPR027463">
    <property type="entry name" value="AcrB_DN_DC_subdom"/>
</dbReference>
<dbReference type="InterPro" id="IPR001036">
    <property type="entry name" value="Acrflvin-R"/>
</dbReference>
<dbReference type="InterPro" id="IPR004763">
    <property type="entry name" value="CusA-like"/>
</dbReference>
<dbReference type="NCBIfam" id="TIGR00914">
    <property type="entry name" value="2A0601"/>
    <property type="match status" value="1"/>
</dbReference>
<dbReference type="PANTHER" id="PTHR32063">
    <property type="match status" value="1"/>
</dbReference>
<dbReference type="PANTHER" id="PTHR32063:SF19">
    <property type="entry name" value="CATION EFFLUX SYSTEM PROTEIN CUSA"/>
    <property type="match status" value="1"/>
</dbReference>
<dbReference type="Pfam" id="PF00873">
    <property type="entry name" value="ACR_tran"/>
    <property type="match status" value="1"/>
</dbReference>
<dbReference type="PRINTS" id="PR00702">
    <property type="entry name" value="ACRIFLAVINRP"/>
</dbReference>
<dbReference type="SUPFAM" id="SSF82693">
    <property type="entry name" value="Multidrug efflux transporter AcrB pore domain, PN1, PN2, PC1 and PC2 subdomains"/>
    <property type="match status" value="2"/>
</dbReference>
<dbReference type="SUPFAM" id="SSF82714">
    <property type="entry name" value="Multidrug efflux transporter AcrB TolC docking domain, DN and DC subdomains"/>
    <property type="match status" value="2"/>
</dbReference>
<dbReference type="SUPFAM" id="SSF82866">
    <property type="entry name" value="Multidrug efflux transporter AcrB transmembrane domain"/>
    <property type="match status" value="2"/>
</dbReference>
<comment type="function">
    <text evidence="1">Part of a cation efflux system that mediates resistance to copper and silver.</text>
</comment>
<comment type="subunit">
    <text evidence="1">The cus efflux system is composed of CusA, CusB, CusC and CusF.</text>
</comment>
<comment type="subcellular location">
    <subcellularLocation>
        <location evidence="3">Cell inner membrane</location>
        <topology evidence="3">Multi-pass membrane protein</topology>
    </subcellularLocation>
</comment>
<comment type="induction">
    <text evidence="3">Transcriptionally regulated by CusR in response to copper and silver ions.</text>
</comment>
<comment type="similarity">
    <text evidence="3">Belongs to the resistance-nodulation-cell division (RND) (TC 2.A.6) family.</text>
</comment>
<feature type="chain" id="PRO_0000161816" description="Cation efflux system protein CusA">
    <location>
        <begin position="1"/>
        <end position="1045"/>
    </location>
</feature>
<feature type="transmembrane region" description="Helical" evidence="2">
    <location>
        <begin position="14"/>
        <end position="34"/>
    </location>
</feature>
<feature type="transmembrane region" description="Helical" evidence="2">
    <location>
        <begin position="336"/>
        <end position="356"/>
    </location>
</feature>
<feature type="transmembrane region" description="Helical" evidence="2">
    <location>
        <begin position="361"/>
        <end position="381"/>
    </location>
</feature>
<feature type="transmembrane region" description="Helical" evidence="2">
    <location>
        <begin position="388"/>
        <end position="408"/>
    </location>
</feature>
<feature type="transmembrane region" description="Helical" evidence="2">
    <location>
        <begin position="444"/>
        <end position="464"/>
    </location>
</feature>
<feature type="transmembrane region" description="Helical" evidence="2">
    <location>
        <begin position="483"/>
        <end position="503"/>
    </location>
</feature>
<feature type="transmembrane region" description="Helical" evidence="2">
    <location>
        <begin position="530"/>
        <end position="550"/>
    </location>
</feature>
<feature type="transmembrane region" description="Helical" evidence="2">
    <location>
        <begin position="869"/>
        <end position="889"/>
    </location>
</feature>
<feature type="transmembrane region" description="Helical" evidence="2">
    <location>
        <begin position="896"/>
        <end position="916"/>
    </location>
</feature>
<feature type="transmembrane region" description="Helical" evidence="2">
    <location>
        <begin position="926"/>
        <end position="946"/>
    </location>
</feature>
<feature type="transmembrane region" description="Helical" evidence="2">
    <location>
        <begin position="983"/>
        <end position="1003"/>
    </location>
</feature>
<feature type="transmembrane region" description="Helical" evidence="2">
    <location>
        <begin position="1010"/>
        <end position="1030"/>
    </location>
</feature>
<protein>
    <recommendedName>
        <fullName>Cation efflux system protein CusA</fullName>
    </recommendedName>
</protein>
<keyword id="KW-0997">Cell inner membrane</keyword>
<keyword id="KW-1003">Cell membrane</keyword>
<keyword id="KW-0186">Copper</keyword>
<keyword id="KW-0187">Copper transport</keyword>
<keyword id="KW-0406">Ion transport</keyword>
<keyword id="KW-0472">Membrane</keyword>
<keyword id="KW-1185">Reference proteome</keyword>
<keyword id="KW-0812">Transmembrane</keyword>
<keyword id="KW-1133">Transmembrane helix</keyword>
<keyword id="KW-0813">Transport</keyword>
<evidence type="ECO:0000250" key="1"/>
<evidence type="ECO:0000255" key="2"/>
<evidence type="ECO:0000305" key="3"/>
<proteinExistence type="inferred from homology"/>
<accession>Q8XBY1</accession>
<name>CUSA_ECO57</name>
<sequence length="1045" mass="114538">MIEWIIRRSVANRFLVLMGALFLSIWGTWTIINTPVDALPDLSDVQVIIKTSYPGQAPQIVENQVTYPLTTTMLSVPGAKTVRGFSQFGDSYVYVIFEDGTDPYWARSRVLEYLNQVQGKLPAGVSAELGPDATGVGWIYEYALVDRSGKHDLADLRSLQDWFLKYELKTIPDVAEVASVGGVVKEYQVVIDPQRLAQYGISLAEVKSALDASNQEAGGSSIELAEAEYMVRASGYLQTLDDFNHIVLKASENGVPVYLRDVAKIQVGPEMRRGIAELNGEVVGGVVILRSGKNAREVIAAVKDKLETLKSSLPEGVEIVTTYDRSQLIDRAIDNLSGKLLEEFIVVAVVCALFLWHVRSALVAIISLPLGLCIAFIVMHFQGLNANIMSLGGIAIAVGAMVDAAIVMIENAHKRLEEWQHQHPDATLDNKTRWQVITNASVEVGPALFISLLIITLSFIPIFTLEGQEGRLFGPLAFTKTYAMAGAALLAIVVIPILMGYWIRGKIPPESSNPLNRFLIRVYHPLLLKVLHWPKTTLLVAALSVLTVLWPLNKVGGEFLPQINEGDLLYMPSTLPGISAAEAASMLQKTDKLIMSVPEVARVFGKTGKAETATDSAPLEMVETTIQLKPQEQWRPGMTMDKIIEELDNTVRLPGLANLWVPPIRNRIDMLSTGIKSPIGIKVSGTVLADIDAMAEQIEEVARTVPGVASALAERLEGGRYINVEINREKAARYGMTVADVQLFVTSAVGGAMVGETVEGIARYPINLRYPQSWRDSPQALRQLPILTPMKQQITLADVADVKVSTGPSMLKTENARPTSWIYIDARDRDMVSVVHDLQKAIAEKVQLKPGTSVAFSGQFELLERANHKLKLMVPMTLMIIFVLLYLAFRRVGEALLIISSVPFALVGGIWLLWWMGFHLSVATGTGFIALAGVAAEFGVVMLMYLRHAIEAEPSLNNPQTFSEQKLDEALHHGAVLRVRPKAMTVAVIIAGLLPILWGTGAGSEVMSRIAAPMIGGMITAPLLSLFIIPAAYKLMWLHRHRVRK</sequence>
<organism>
    <name type="scientific">Escherichia coli O157:H7</name>
    <dbReference type="NCBI Taxonomy" id="83334"/>
    <lineage>
        <taxon>Bacteria</taxon>
        <taxon>Pseudomonadati</taxon>
        <taxon>Pseudomonadota</taxon>
        <taxon>Gammaproteobacteria</taxon>
        <taxon>Enterobacterales</taxon>
        <taxon>Enterobacteriaceae</taxon>
        <taxon>Escherichia</taxon>
    </lineage>
</organism>
<gene>
    <name type="primary">cusA</name>
    <name type="ordered locus">Z0714</name>
    <name type="ordered locus">ECs0613</name>
</gene>